<sequence>MPIHDKSPRPQEFAAVDLGSNSFHMVIARVVDGAMQIIGRLKQRVHLADGLGPDNMLSEEAMTRGLNCLSLFAERLQGFSPASVCIVGTHTLRQALNATDFLKRAEKVIPYPIEIISGNEEARLIFMGVEHTQPEKGRKLVIDIGGGSTELVIGENFEPILVESRRMGCVSFAQLYFPGGVINKENFQRARMAAAQKLETLTWQFRIQGWNVAMGASGTIKAAHEVLMEMGEKDGIITPERLEKLVKEVLRHRNFASLSLPGLSEERKTVFVPGLAILCGVFDALAIRELRLSDGALREGVLYEMEGRFRHQDVRSRTASSLANQYHIDSEQARRVLDTTMQMYEQWREQQPKLAHPQLEALLRWAAMLHEVGLNINHSGLHRHSAYILQNSDLPGFNQEQQLMMATLVRYHRKAIKLDDLPRFTLFKKKQFLPLIQLLRLGVLLNNQRQATTTPPTLTLITDDSHWTLRFPHDWFSQNALVLLDLEKEQEYWEGVAGWRLKIEEESTPEIAA</sequence>
<name>PPX_ECO57</name>
<gene>
    <name type="primary">ppx</name>
    <name type="ordered locus">Z3765</name>
    <name type="ordered locus">ECs3364</name>
</gene>
<reference key="1">
    <citation type="journal article" date="2001" name="Nature">
        <title>Genome sequence of enterohaemorrhagic Escherichia coli O157:H7.</title>
        <authorList>
            <person name="Perna N.T."/>
            <person name="Plunkett G. III"/>
            <person name="Burland V."/>
            <person name="Mau B."/>
            <person name="Glasner J.D."/>
            <person name="Rose D.J."/>
            <person name="Mayhew G.F."/>
            <person name="Evans P.S."/>
            <person name="Gregor J."/>
            <person name="Kirkpatrick H.A."/>
            <person name="Posfai G."/>
            <person name="Hackett J."/>
            <person name="Klink S."/>
            <person name="Boutin A."/>
            <person name="Shao Y."/>
            <person name="Miller L."/>
            <person name="Grotbeck E.J."/>
            <person name="Davis N.W."/>
            <person name="Lim A."/>
            <person name="Dimalanta E.T."/>
            <person name="Potamousis K."/>
            <person name="Apodaca J."/>
            <person name="Anantharaman T.S."/>
            <person name="Lin J."/>
            <person name="Yen G."/>
            <person name="Schwartz D.C."/>
            <person name="Welch R.A."/>
            <person name="Blattner F.R."/>
        </authorList>
    </citation>
    <scope>NUCLEOTIDE SEQUENCE [LARGE SCALE GENOMIC DNA]</scope>
    <source>
        <strain>O157:H7 / EDL933 / ATCC 700927 / EHEC</strain>
    </source>
</reference>
<reference key="2">
    <citation type="journal article" date="2001" name="DNA Res.">
        <title>Complete genome sequence of enterohemorrhagic Escherichia coli O157:H7 and genomic comparison with a laboratory strain K-12.</title>
        <authorList>
            <person name="Hayashi T."/>
            <person name="Makino K."/>
            <person name="Ohnishi M."/>
            <person name="Kurokawa K."/>
            <person name="Ishii K."/>
            <person name="Yokoyama K."/>
            <person name="Han C.-G."/>
            <person name="Ohtsubo E."/>
            <person name="Nakayama K."/>
            <person name="Murata T."/>
            <person name="Tanaka M."/>
            <person name="Tobe T."/>
            <person name="Iida T."/>
            <person name="Takami H."/>
            <person name="Honda T."/>
            <person name="Sasakawa C."/>
            <person name="Ogasawara N."/>
            <person name="Yasunaga T."/>
            <person name="Kuhara S."/>
            <person name="Shiba T."/>
            <person name="Hattori M."/>
            <person name="Shinagawa H."/>
        </authorList>
    </citation>
    <scope>NUCLEOTIDE SEQUENCE [LARGE SCALE GENOMIC DNA]</scope>
    <source>
        <strain>O157:H7 / Sakai / RIMD 0509952 / EHEC</strain>
    </source>
</reference>
<reference evidence="6" key="3">
    <citation type="journal article" date="2006" name="J. Mol. Biol.">
        <title>The structure of the exopolyphosphatase (PPX) from Escherichia coli O157:H7 suggests a binding mode for long polyphosphate chains.</title>
        <authorList>
            <person name="Rangarajan E.S."/>
            <person name="Nadeau G."/>
            <person name="Li Y."/>
            <person name="Wagner J."/>
            <person name="Hung M.N."/>
            <person name="Schrag J.D."/>
            <person name="Cygler M."/>
            <person name="Matte A."/>
        </authorList>
    </citation>
    <scope>X-RAY CRYSTALLOGRAPHY (2.20 ANGSTROMS) OF 2-513</scope>
    <scope>SUBUNIT</scope>
</reference>
<dbReference type="EC" id="3.6.1.11" evidence="2"/>
<dbReference type="EMBL" id="AE005174">
    <property type="protein sequence ID" value="AAG57612.1"/>
    <property type="molecule type" value="Genomic_DNA"/>
</dbReference>
<dbReference type="EMBL" id="BA000007">
    <property type="protein sequence ID" value="BAB36787.1"/>
    <property type="molecule type" value="Genomic_DNA"/>
</dbReference>
<dbReference type="PIR" id="D91049">
    <property type="entry name" value="D91049"/>
</dbReference>
<dbReference type="PIR" id="H85893">
    <property type="entry name" value="H85893"/>
</dbReference>
<dbReference type="RefSeq" id="NP_311391.1">
    <property type="nucleotide sequence ID" value="NC_002695.1"/>
</dbReference>
<dbReference type="RefSeq" id="WP_001121363.1">
    <property type="nucleotide sequence ID" value="NZ_VOAI01000001.1"/>
</dbReference>
<dbReference type="PDB" id="2FLO">
    <property type="method" value="X-ray"/>
    <property type="resolution" value="2.20 A"/>
    <property type="chains" value="A/B/C/D=2-513"/>
</dbReference>
<dbReference type="PDBsum" id="2FLO"/>
<dbReference type="SMR" id="P0AFL8"/>
<dbReference type="STRING" id="155864.Z3765"/>
<dbReference type="GeneID" id="914211"/>
<dbReference type="GeneID" id="93774634"/>
<dbReference type="KEGG" id="ece:Z3765"/>
<dbReference type="KEGG" id="ecs:ECs_3364"/>
<dbReference type="PATRIC" id="fig|386585.9.peg.3514"/>
<dbReference type="eggNOG" id="COG0248">
    <property type="taxonomic scope" value="Bacteria"/>
</dbReference>
<dbReference type="HOGENOM" id="CLU_025908_4_0_6"/>
<dbReference type="OMA" id="RISEGCY"/>
<dbReference type="EvolutionaryTrace" id="P0AFL8"/>
<dbReference type="Proteomes" id="UP000000558">
    <property type="component" value="Chromosome"/>
</dbReference>
<dbReference type="Proteomes" id="UP000002519">
    <property type="component" value="Chromosome"/>
</dbReference>
<dbReference type="GO" id="GO:0005886">
    <property type="term" value="C:plasma membrane"/>
    <property type="evidence" value="ECO:0007669"/>
    <property type="project" value="UniProtKB-SubCell"/>
</dbReference>
<dbReference type="GO" id="GO:0004309">
    <property type="term" value="F:exopolyphosphatase activity"/>
    <property type="evidence" value="ECO:0007669"/>
    <property type="project" value="UniProtKB-EC"/>
</dbReference>
<dbReference type="GO" id="GO:0006798">
    <property type="term" value="P:polyphosphate catabolic process"/>
    <property type="evidence" value="ECO:0007669"/>
    <property type="project" value="TreeGrafter"/>
</dbReference>
<dbReference type="CDD" id="cd24116">
    <property type="entry name" value="ASKHA_NBD_EcPPX-like"/>
    <property type="match status" value="1"/>
</dbReference>
<dbReference type="FunFam" id="1.10.3210.10:FF:000006">
    <property type="entry name" value="Exopolyphosphatase"/>
    <property type="match status" value="1"/>
</dbReference>
<dbReference type="FunFam" id="3.30.70.2260:FF:000001">
    <property type="entry name" value="Exopolyphosphatase"/>
    <property type="match status" value="1"/>
</dbReference>
<dbReference type="FunFam" id="3.30.420.150:FF:000001">
    <property type="entry name" value="Guanosine-5'-triphosphate,3'-diphosphate pyrophosphatase"/>
    <property type="match status" value="1"/>
</dbReference>
<dbReference type="FunFam" id="3.30.420.40:FF:000023">
    <property type="entry name" value="Guanosine-5'-triphosphate,3'-diphosphate pyrophosphatase"/>
    <property type="match status" value="1"/>
</dbReference>
<dbReference type="Gene3D" id="3.30.420.40">
    <property type="match status" value="1"/>
</dbReference>
<dbReference type="Gene3D" id="3.30.70.2260">
    <property type="match status" value="1"/>
</dbReference>
<dbReference type="Gene3D" id="3.30.420.150">
    <property type="entry name" value="Exopolyphosphatase. Domain 2"/>
    <property type="match status" value="1"/>
</dbReference>
<dbReference type="Gene3D" id="1.10.3210.10">
    <property type="entry name" value="Hypothetical protein af1432"/>
    <property type="match status" value="1"/>
</dbReference>
<dbReference type="InterPro" id="IPR043129">
    <property type="entry name" value="ATPase_NBD"/>
</dbReference>
<dbReference type="InterPro" id="IPR022371">
    <property type="entry name" value="Exopolyphosphatase"/>
</dbReference>
<dbReference type="InterPro" id="IPR050273">
    <property type="entry name" value="GppA/Ppx_hydrolase"/>
</dbReference>
<dbReference type="InterPro" id="IPR048950">
    <property type="entry name" value="Ppx_GppA_C"/>
</dbReference>
<dbReference type="InterPro" id="IPR003695">
    <property type="entry name" value="Ppx_GppA_N"/>
</dbReference>
<dbReference type="InterPro" id="IPR030673">
    <property type="entry name" value="PyroPPase_GppA_Ppx"/>
</dbReference>
<dbReference type="NCBIfam" id="TIGR03706">
    <property type="entry name" value="exo_poly_only"/>
    <property type="match status" value="1"/>
</dbReference>
<dbReference type="NCBIfam" id="NF008108">
    <property type="entry name" value="PRK10854.1"/>
    <property type="match status" value="1"/>
</dbReference>
<dbReference type="PANTHER" id="PTHR30005">
    <property type="entry name" value="EXOPOLYPHOSPHATASE"/>
    <property type="match status" value="1"/>
</dbReference>
<dbReference type="PANTHER" id="PTHR30005:SF14">
    <property type="entry name" value="EXOPOLYPHOSPHATASE"/>
    <property type="match status" value="1"/>
</dbReference>
<dbReference type="Pfam" id="PF02541">
    <property type="entry name" value="Ppx-GppA"/>
    <property type="match status" value="1"/>
</dbReference>
<dbReference type="Pfam" id="PF21447">
    <property type="entry name" value="Ppx-GppA_III"/>
    <property type="match status" value="1"/>
</dbReference>
<dbReference type="PIRSF" id="PIRSF001267">
    <property type="entry name" value="Pyrophosphatase_GppA_Ppx"/>
    <property type="match status" value="1"/>
</dbReference>
<dbReference type="SUPFAM" id="SSF53067">
    <property type="entry name" value="Actin-like ATPase domain"/>
    <property type="match status" value="2"/>
</dbReference>
<dbReference type="SUPFAM" id="SSF109604">
    <property type="entry name" value="HD-domain/PDEase-like"/>
    <property type="match status" value="1"/>
</dbReference>
<feature type="initiator methionine" description="Removed" evidence="1">
    <location>
        <position position="1"/>
    </location>
</feature>
<feature type="chain" id="PRO_0000194300" description="Exopolyphosphatase">
    <location>
        <begin position="2"/>
        <end position="513"/>
    </location>
</feature>
<feature type="strand" evidence="7">
    <location>
        <begin position="12"/>
        <end position="18"/>
    </location>
</feature>
<feature type="strand" evidence="7">
    <location>
        <begin position="20"/>
        <end position="31"/>
    </location>
</feature>
<feature type="strand" evidence="7">
    <location>
        <begin position="34"/>
        <end position="44"/>
    </location>
</feature>
<feature type="helix" evidence="7">
    <location>
        <begin position="48"/>
        <end position="50"/>
    </location>
</feature>
<feature type="helix" evidence="7">
    <location>
        <begin position="59"/>
        <end position="75"/>
    </location>
</feature>
<feature type="turn" evidence="7">
    <location>
        <begin position="76"/>
        <end position="78"/>
    </location>
</feature>
<feature type="helix" evidence="7">
    <location>
        <begin position="81"/>
        <end position="83"/>
    </location>
</feature>
<feature type="strand" evidence="7">
    <location>
        <begin position="84"/>
        <end position="88"/>
    </location>
</feature>
<feature type="helix" evidence="7">
    <location>
        <begin position="90"/>
        <end position="94"/>
    </location>
</feature>
<feature type="helix" evidence="7">
    <location>
        <begin position="98"/>
        <end position="105"/>
    </location>
</feature>
<feature type="turn" evidence="7">
    <location>
        <begin position="106"/>
        <end position="108"/>
    </location>
</feature>
<feature type="strand" evidence="7">
    <location>
        <begin position="113"/>
        <end position="115"/>
    </location>
</feature>
<feature type="helix" evidence="7">
    <location>
        <begin position="118"/>
        <end position="131"/>
    </location>
</feature>
<feature type="strand" evidence="7">
    <location>
        <begin position="139"/>
        <end position="144"/>
    </location>
</feature>
<feature type="strand" evidence="7">
    <location>
        <begin position="149"/>
        <end position="155"/>
    </location>
</feature>
<feature type="strand" evidence="7">
    <location>
        <begin position="158"/>
        <end position="166"/>
    </location>
</feature>
<feature type="helix" evidence="7">
    <location>
        <begin position="169"/>
        <end position="176"/>
    </location>
</feature>
<feature type="helix" evidence="7">
    <location>
        <begin position="178"/>
        <end position="180"/>
    </location>
</feature>
<feature type="helix" evidence="7">
    <location>
        <begin position="184"/>
        <end position="196"/>
    </location>
</feature>
<feature type="turn" evidence="7">
    <location>
        <begin position="197"/>
        <end position="201"/>
    </location>
</feature>
<feature type="helix" evidence="7">
    <location>
        <begin position="202"/>
        <end position="208"/>
    </location>
</feature>
<feature type="strand" evidence="7">
    <location>
        <begin position="211"/>
        <end position="217"/>
    </location>
</feature>
<feature type="helix" evidence="7">
    <location>
        <begin position="218"/>
        <end position="228"/>
    </location>
</feature>
<feature type="turn" evidence="7">
    <location>
        <begin position="229"/>
        <end position="231"/>
    </location>
</feature>
<feature type="helix" evidence="7">
    <location>
        <begin position="239"/>
        <end position="250"/>
    </location>
</feature>
<feature type="helix" evidence="7">
    <location>
        <begin position="255"/>
        <end position="257"/>
    </location>
</feature>
<feature type="helix" evidence="7">
    <location>
        <begin position="265"/>
        <end position="268"/>
    </location>
</feature>
<feature type="helix" evidence="7">
    <location>
        <begin position="271"/>
        <end position="285"/>
    </location>
</feature>
<feature type="strand" evidence="7">
    <location>
        <begin position="290"/>
        <end position="292"/>
    </location>
</feature>
<feature type="helix" evidence="7">
    <location>
        <begin position="297"/>
        <end position="309"/>
    </location>
</feature>
<feature type="helix" evidence="7">
    <location>
        <begin position="314"/>
        <end position="326"/>
    </location>
</feature>
<feature type="helix" evidence="7">
    <location>
        <begin position="330"/>
        <end position="350"/>
    </location>
</feature>
<feature type="turn" evidence="7">
    <location>
        <begin position="352"/>
        <end position="354"/>
    </location>
</feature>
<feature type="helix" evidence="7">
    <location>
        <begin position="357"/>
        <end position="369"/>
    </location>
</feature>
<feature type="helix" evidence="7">
    <location>
        <begin position="372"/>
        <end position="375"/>
    </location>
</feature>
<feature type="helix" evidence="7">
    <location>
        <begin position="381"/>
        <end position="391"/>
    </location>
</feature>
<feature type="helix" evidence="7">
    <location>
        <begin position="399"/>
        <end position="410"/>
    </location>
</feature>
<feature type="strand" evidence="7">
    <location>
        <begin position="412"/>
        <end position="414"/>
    </location>
</feature>
<feature type="helix" evidence="7">
    <location>
        <begin position="418"/>
        <end position="420"/>
    </location>
</feature>
<feature type="strand" evidence="7">
    <location>
        <begin position="425"/>
        <end position="427"/>
    </location>
</feature>
<feature type="helix" evidence="7">
    <location>
        <begin position="429"/>
        <end position="444"/>
    </location>
</feature>
<feature type="turn" evidence="7">
    <location>
        <begin position="445"/>
        <end position="448"/>
    </location>
</feature>
<feature type="helix" evidence="7">
    <location>
        <begin position="449"/>
        <end position="451"/>
    </location>
</feature>
<feature type="strand" evidence="7">
    <location>
        <begin position="459"/>
        <end position="463"/>
    </location>
</feature>
<feature type="strand" evidence="7">
    <location>
        <begin position="466"/>
        <end position="471"/>
    </location>
</feature>
<feature type="helix" evidence="7">
    <location>
        <begin position="475"/>
        <end position="477"/>
    </location>
</feature>
<feature type="helix" evidence="7">
    <location>
        <begin position="480"/>
        <end position="494"/>
    </location>
</feature>
<feature type="strand" evidence="7">
    <location>
        <begin position="500"/>
        <end position="505"/>
    </location>
</feature>
<organism>
    <name type="scientific">Escherichia coli O157:H7</name>
    <dbReference type="NCBI Taxonomy" id="83334"/>
    <lineage>
        <taxon>Bacteria</taxon>
        <taxon>Pseudomonadati</taxon>
        <taxon>Pseudomonadota</taxon>
        <taxon>Gammaproteobacteria</taxon>
        <taxon>Enterobacterales</taxon>
        <taxon>Enterobacteriaceae</taxon>
        <taxon>Escherichia</taxon>
    </lineage>
</organism>
<accession>P0AFL8</accession>
<accession>P29014</accession>
<accession>P76981</accession>
<evidence type="ECO:0000250" key="1"/>
<evidence type="ECO:0000250" key="2">
    <source>
        <dbReference type="UniProtKB" id="P0AFL6"/>
    </source>
</evidence>
<evidence type="ECO:0000269" key="3">
    <source>
    </source>
</evidence>
<evidence type="ECO:0000303" key="4">
    <source>
    </source>
</evidence>
<evidence type="ECO:0000305" key="5"/>
<evidence type="ECO:0007744" key="6">
    <source>
        <dbReference type="PDB" id="2FLO"/>
    </source>
</evidence>
<evidence type="ECO:0007829" key="7">
    <source>
        <dbReference type="PDB" id="2FLO"/>
    </source>
</evidence>
<comment type="function">
    <text evidence="2">Degradation of inorganic polyphosphates (polyP). Releases orthophosphate processively from the ends of the polyP chain.</text>
</comment>
<comment type="catalytic activity">
    <reaction evidence="2">
        <text>[phosphate](n) + H2O = [phosphate](n-1) + phosphate + H(+)</text>
        <dbReference type="Rhea" id="RHEA:21528"/>
        <dbReference type="Rhea" id="RHEA-COMP:9859"/>
        <dbReference type="Rhea" id="RHEA-COMP:14279"/>
        <dbReference type="ChEBI" id="CHEBI:15377"/>
        <dbReference type="ChEBI" id="CHEBI:15378"/>
        <dbReference type="ChEBI" id="CHEBI:16838"/>
        <dbReference type="ChEBI" id="CHEBI:43474"/>
        <dbReference type="EC" id="3.6.1.11"/>
    </reaction>
</comment>
<comment type="cofactor">
    <cofactor evidence="2">
        <name>Mg(2+)</name>
        <dbReference type="ChEBI" id="CHEBI:18420"/>
    </cofactor>
</comment>
<comment type="subunit">
    <text evidence="3">Homodimer.</text>
</comment>
<comment type="subcellular location">
    <subcellularLocation>
        <location evidence="2">Cell membrane</location>
        <topology evidence="2">Peripheral membrane protein</topology>
    </subcellularLocation>
</comment>
<comment type="similarity">
    <text evidence="5">Belongs to the GppA/Ppx family.</text>
</comment>
<proteinExistence type="evidence at protein level"/>
<keyword id="KW-0002">3D-structure</keyword>
<keyword id="KW-1003">Cell membrane</keyword>
<keyword id="KW-0378">Hydrolase</keyword>
<keyword id="KW-0460">Magnesium</keyword>
<keyword id="KW-0472">Membrane</keyword>
<keyword id="KW-1185">Reference proteome</keyword>
<protein>
    <recommendedName>
        <fullName evidence="4">Exopolyphosphatase</fullName>
        <shortName evidence="5">ExopolyPase</shortName>
        <ecNumber evidence="2">3.6.1.11</ecNumber>
    </recommendedName>
</protein>